<accession>P03465</accession>
<comment type="function">
    <text evidence="1">Binds to the N-acetyl-9-O-acetylneuraminic acid residues on the cell surface, bringing about the attachment of the virus particle to the cell. Plays a major role in the determination of host range restriction and virulence. Class I viral fusion protein. Responsible for penetration of the virus into the cell cytoplasm by mediating the fusion of the membrane of the endocytosed virus particle with the endosomal membrane. Low pH in endosomes induce an irreversible conformational change in HEF2, releasing the fusion hydrophobic peptide. Several trimers are required to form a competent fusion pore. Displays a receptor-destroying activity which is a neuraminidate-O-acetyl esterase. This activity cleaves off any receptor on the cell surface, which would otherwise prevent virions release. These cleavages prevent self-aggregation and ensure the efficient spread of the progeny virus from cell to cell.</text>
</comment>
<comment type="catalytic activity">
    <reaction evidence="1">
        <text>N-acetyl-9-O-acetylneuraminate + H2O = N-acetylneuraminate + acetate + H(+)</text>
        <dbReference type="Rhea" id="RHEA:22600"/>
        <dbReference type="ChEBI" id="CHEBI:15377"/>
        <dbReference type="ChEBI" id="CHEBI:15378"/>
        <dbReference type="ChEBI" id="CHEBI:28999"/>
        <dbReference type="ChEBI" id="CHEBI:30089"/>
        <dbReference type="ChEBI" id="CHEBI:35418"/>
        <dbReference type="EC" id="3.1.1.53"/>
    </reaction>
</comment>
<comment type="catalytic activity">
    <reaction evidence="1">
        <text>N-acetyl-4-O-acetylneuraminate + H2O = N-acetylneuraminate + acetate + H(+)</text>
        <dbReference type="Rhea" id="RHEA:25564"/>
        <dbReference type="ChEBI" id="CHEBI:15377"/>
        <dbReference type="ChEBI" id="CHEBI:15378"/>
        <dbReference type="ChEBI" id="CHEBI:29006"/>
        <dbReference type="ChEBI" id="CHEBI:30089"/>
        <dbReference type="ChEBI" id="CHEBI:35418"/>
        <dbReference type="EC" id="3.1.1.53"/>
    </reaction>
</comment>
<comment type="subunit">
    <text evidence="1">Homotrimer of disulfide-linked HEF1-HEF2.</text>
</comment>
<comment type="subcellular location">
    <subcellularLocation>
        <location evidence="1">Virion membrane</location>
        <topology evidence="1">Single-pass type I membrane protein</topology>
    </subcellularLocation>
    <subcellularLocation>
        <location evidence="1">Host cell membrane</location>
        <topology evidence="1">Single-pass type I membrane protein</topology>
    </subcellularLocation>
</comment>
<comment type="PTM">
    <text evidence="1">In natural infection, inactive HEF is matured into HEF1 and HEF2 outside the cell by one or more trypsin-like, arginine-specific endoprotease.</text>
</comment>
<comment type="similarity">
    <text evidence="1">Belongs to the influenza viruses hemagglutinin family.</text>
</comment>
<name>HEMA_INCCA</name>
<reference key="1">
    <citation type="journal article" date="1984" name="J. Virol.">
        <title>Influenza C virus hemagglutinin: comparison with influenza A and B virus hemagglutinins.</title>
        <authorList>
            <person name="Nakada S."/>
            <person name="Creager R.S."/>
            <person name="Krystal M."/>
            <person name="Aaronson R.P."/>
            <person name="Palese P."/>
        </authorList>
    </citation>
    <scope>NUCLEOTIDE SEQUENCE [GENOMIC RNA]</scope>
</reference>
<feature type="signal peptide" evidence="1">
    <location>
        <begin position="1"/>
        <end position="14"/>
    </location>
</feature>
<feature type="chain" id="PRO_0000440552" description="Hemagglutinin-esterase-fusion glycoprotein" evidence="1">
    <location>
        <begin position="15"/>
        <end position="654"/>
    </location>
</feature>
<feature type="chain" id="PRO_0000440553" description="Hemagglutinin-esterase-fusion glycoprotein chain 1" evidence="1">
    <location>
        <begin position="15"/>
        <end position="445"/>
    </location>
</feature>
<feature type="chain" id="PRO_0000440554" description="Hemagglutinin-esterase-fusion glycoprotein chain 2" evidence="1">
    <location>
        <begin position="446"/>
        <end position="654"/>
    </location>
</feature>
<feature type="topological domain" description="Extracellular" evidence="1">
    <location>
        <begin position="15"/>
        <end position="629"/>
    </location>
</feature>
<feature type="transmembrane region" description="Helical" evidence="1">
    <location>
        <begin position="630"/>
        <end position="650"/>
    </location>
</feature>
<feature type="topological domain" description="Cytoplasmic" evidence="1">
    <location>
        <begin position="651"/>
        <end position="654"/>
    </location>
</feature>
<feature type="region of interest" description="Fusion domain-1" evidence="1">
    <location>
        <begin position="15"/>
        <end position="40"/>
    </location>
</feature>
<feature type="region of interest" description="Esterase domain-1" evidence="1">
    <location>
        <begin position="41"/>
        <end position="157"/>
    </location>
</feature>
<feature type="region of interest" description="N-acetyl-9-O-acetylneuraminic acid binding" evidence="1">
    <location>
        <begin position="157"/>
        <end position="309"/>
    </location>
</feature>
<feature type="region of interest" description="Esterase domain-2" evidence="1">
    <location>
        <begin position="309"/>
        <end position="363"/>
    </location>
</feature>
<feature type="region of interest" description="Fusion domain-2" evidence="1">
    <location>
        <begin position="364"/>
        <end position="654"/>
    </location>
</feature>
<feature type="active site" description="Nucleophile" evidence="1">
    <location>
        <position position="71"/>
    </location>
</feature>
<feature type="active site" description="Charge relay system" evidence="1">
    <location>
        <position position="365"/>
    </location>
</feature>
<feature type="active site" description="Charge relay system" evidence="1">
    <location>
        <position position="368"/>
    </location>
</feature>
<feature type="glycosylation site" description="N-linked (GlcNAc...) asparagine; by host" evidence="1">
    <location>
        <position position="26"/>
    </location>
</feature>
<feature type="glycosylation site" description="N-linked (GlcNAc...) asparagine; by host" evidence="1">
    <location>
        <position position="61"/>
    </location>
</feature>
<feature type="glycosylation site" description="N-linked (GlcNAc...) asparagine; by host" evidence="1">
    <location>
        <position position="143"/>
    </location>
</feature>
<feature type="glycosylation site" description="N-linked (GlcNAc...) asparagine; by host" evidence="1">
    <location>
        <position position="188"/>
    </location>
</feature>
<feature type="glycosylation site" description="N-linked (GlcNAc...) asparagine; by host" evidence="1">
    <location>
        <position position="394"/>
    </location>
</feature>
<feature type="glycosylation site" description="N-linked (GlcNAc...) asparagine; by host" evidence="1">
    <location>
        <position position="551"/>
    </location>
</feature>
<feature type="glycosylation site" description="N-linked (GlcNAc...) asparagine; by host" evidence="1">
    <location>
        <position position="602"/>
    </location>
</feature>
<feature type="disulfide bond" description="Interchain (between HEF1 and HEF2 chains)" evidence="1">
    <location>
        <begin position="20"/>
        <end position="582"/>
    </location>
</feature>
<feature type="disulfide bond" evidence="1">
    <location>
        <begin position="209"/>
        <end position="251"/>
    </location>
</feature>
<feature type="disulfide bond" evidence="1">
    <location>
        <begin position="228"/>
        <end position="315"/>
    </location>
</feature>
<feature type="disulfide bond" evidence="1">
    <location>
        <begin position="236"/>
        <end position="288"/>
    </location>
</feature>
<gene>
    <name evidence="1" type="primary">HE</name>
</gene>
<sequence length="654" mass="72085">MFFSLLLMLGLTEAEKIKICLQKQVNSSFSLHNGFGGNLYATEEKRMFELVKPKAGASVLNQSTWIGFGDSRTDQSNSAFPRSLMSAKTADKFRSLSGGSLMLSMFGPPGKVDYLYQGCGKHKVFYEGVNWSPHAAIDCYRKNWTDIKLNFQKSIYELASQSHCMSLVNALDKTIPLQVTKGVAKNCNNSFLKNPALYTQEVKPLEQICGEENLAFFTLPTQFGTYECKLHLVASCYFIYDSKEVYNKRGCGNYFQVIYDSSGKVVGGLDNRVSPYTGNSGDTPTMQCDMLQLKPGRYSVRSSPRFLLMPERSYCFDMKEKGPVTAVQSIWGKGRKSDYAVDQACLSTPGCMLIQKQKPYIGEADDHHGDQEMRELLSGLDYEARCISQSGWVNETSPFTEEYLLPPKFGRCPLAAKEESIPKIPDGLLIPTSGTDTTVTKPKSRIFGIDDLIIGLLFVAIVEAGIGGYLLGSRKESGGGVTKESAEKGFEKIGNDIQILRSSTNIAIEKLNDRISHDEQAIRDLTLEIENARSEALLGELGIIRALLVGNISIGLQESLWELASEITNRAGDLAVEVSPGCWIIDNNICDQSCQNFIFKFNETAPVPTIPPLDTKIDLQSDPFYWGSSLGLAITAANLMAALVISGIAICRTK</sequence>
<keyword id="KW-1015">Disulfide bond</keyword>
<keyword id="KW-1170">Fusion of virus membrane with host endosomal membrane</keyword>
<keyword id="KW-1168">Fusion of virus membrane with host membrane</keyword>
<keyword id="KW-0325">Glycoprotein</keyword>
<keyword id="KW-0348">Hemagglutinin</keyword>
<keyword id="KW-1032">Host cell membrane</keyword>
<keyword id="KW-1043">Host membrane</keyword>
<keyword id="KW-0945">Host-virus interaction</keyword>
<keyword id="KW-0378">Hydrolase</keyword>
<keyword id="KW-0472">Membrane</keyword>
<keyword id="KW-0732">Signal</keyword>
<keyword id="KW-0812">Transmembrane</keyword>
<keyword id="KW-1133">Transmembrane helix</keyword>
<keyword id="KW-1161">Viral attachment to host cell</keyword>
<keyword id="KW-0261">Viral envelope protein</keyword>
<keyword id="KW-1162">Viral penetration into host cytoplasm</keyword>
<keyword id="KW-0946">Virion</keyword>
<keyword id="KW-1164">Virus endocytosis by host</keyword>
<keyword id="KW-1160">Virus entry into host cell</keyword>
<evidence type="ECO:0000255" key="1">
    <source>
        <dbReference type="HAMAP-Rule" id="MF_04072"/>
    </source>
</evidence>
<organism>
    <name type="scientific">Influenza C virus (strain C/California/1978)</name>
    <dbReference type="NCBI Taxonomy" id="203224"/>
    <lineage>
        <taxon>Viruses</taxon>
        <taxon>Riboviria</taxon>
        <taxon>Orthornavirae</taxon>
        <taxon>Negarnaviricota</taxon>
        <taxon>Polyploviricotina</taxon>
        <taxon>Insthoviricetes</taxon>
        <taxon>Articulavirales</taxon>
        <taxon>Orthomyxoviridae</taxon>
        <taxon>Gammainfluenzavirus</taxon>
        <taxon>Gammainfluenzavirus influenzae</taxon>
        <taxon>Influenza C virus</taxon>
    </lineage>
</organism>
<organismHost>
    <name type="scientific">Homo sapiens</name>
    <name type="common">Human</name>
    <dbReference type="NCBI Taxonomy" id="9606"/>
</organismHost>
<organismHost>
    <name type="scientific">Sus scrofa</name>
    <name type="common">Pig</name>
    <dbReference type="NCBI Taxonomy" id="9823"/>
</organismHost>
<protein>
    <recommendedName>
        <fullName evidence="1">Hemagglutinin-esterase-fusion glycoprotein</fullName>
        <shortName evidence="1">HEF</shortName>
        <ecNumber evidence="1">3.1.1.53</ecNumber>
    </recommendedName>
    <component>
        <recommendedName>
            <fullName evidence="1">Hemagglutinin-esterase-fusion glycoprotein chain 1</fullName>
            <shortName evidence="1">HEF1</shortName>
        </recommendedName>
    </component>
    <component>
        <recommendedName>
            <fullName evidence="1">Hemagglutinin-esterase-fusion glycoprotein chain 2</fullName>
            <shortName evidence="1">HEF2</shortName>
        </recommendedName>
    </component>
</protein>
<dbReference type="EC" id="3.1.1.53" evidence="1"/>
<dbReference type="PIR" id="A04076">
    <property type="entry name" value="HMIVC8"/>
</dbReference>
<dbReference type="SMR" id="P03465"/>
<dbReference type="GlyCosmos" id="P03465">
    <property type="glycosylation" value="7 sites, No reported glycans"/>
</dbReference>
<dbReference type="GO" id="GO:0020002">
    <property type="term" value="C:host cell plasma membrane"/>
    <property type="evidence" value="ECO:0007669"/>
    <property type="project" value="UniProtKB-SubCell"/>
</dbReference>
<dbReference type="GO" id="GO:0016020">
    <property type="term" value="C:membrane"/>
    <property type="evidence" value="ECO:0007669"/>
    <property type="project" value="UniProtKB-UniRule"/>
</dbReference>
<dbReference type="GO" id="GO:0019031">
    <property type="term" value="C:viral envelope"/>
    <property type="evidence" value="ECO:0007669"/>
    <property type="project" value="UniProtKB-UniRule"/>
</dbReference>
<dbReference type="GO" id="GO:0055036">
    <property type="term" value="C:virion membrane"/>
    <property type="evidence" value="ECO:0007669"/>
    <property type="project" value="UniProtKB-SubCell"/>
</dbReference>
<dbReference type="GO" id="GO:0046789">
    <property type="term" value="F:host cell surface receptor binding"/>
    <property type="evidence" value="ECO:0007669"/>
    <property type="project" value="UniProtKB-UniRule"/>
</dbReference>
<dbReference type="GO" id="GO:0106331">
    <property type="term" value="F:sialate 4-O-acetylesterase activity"/>
    <property type="evidence" value="ECO:0007669"/>
    <property type="project" value="RHEA"/>
</dbReference>
<dbReference type="GO" id="GO:0106330">
    <property type="term" value="F:sialate 9-O-acetylesterase activity"/>
    <property type="evidence" value="ECO:0007669"/>
    <property type="project" value="RHEA"/>
</dbReference>
<dbReference type="GO" id="GO:0075509">
    <property type="term" value="P:endocytosis involved in viral entry into host cell"/>
    <property type="evidence" value="ECO:0007669"/>
    <property type="project" value="UniProtKB-KW"/>
</dbReference>
<dbReference type="GO" id="GO:0039654">
    <property type="term" value="P:fusion of virus membrane with host endosome membrane"/>
    <property type="evidence" value="ECO:0007669"/>
    <property type="project" value="UniProtKB-UniRule"/>
</dbReference>
<dbReference type="GO" id="GO:0019064">
    <property type="term" value="P:fusion of virus membrane with host plasma membrane"/>
    <property type="evidence" value="ECO:0007669"/>
    <property type="project" value="InterPro"/>
</dbReference>
<dbReference type="GO" id="GO:0046761">
    <property type="term" value="P:viral budding from plasma membrane"/>
    <property type="evidence" value="ECO:0007669"/>
    <property type="project" value="UniProtKB-UniRule"/>
</dbReference>
<dbReference type="GO" id="GO:0019062">
    <property type="term" value="P:virion attachment to host cell"/>
    <property type="evidence" value="ECO:0007669"/>
    <property type="project" value="UniProtKB-KW"/>
</dbReference>
<dbReference type="Gene3D" id="2.20.70.20">
    <property type="match status" value="2"/>
</dbReference>
<dbReference type="Gene3D" id="3.90.20.10">
    <property type="match status" value="1"/>
</dbReference>
<dbReference type="HAMAP" id="MF_04072">
    <property type="entry name" value="INFV_HEMA"/>
    <property type="match status" value="1"/>
</dbReference>
<dbReference type="InterPro" id="IPR008980">
    <property type="entry name" value="Capsid_hemagglutn"/>
</dbReference>
<dbReference type="InterPro" id="IPR007142">
    <property type="entry name" value="Hemagglutn-estrase_core"/>
</dbReference>
<dbReference type="InterPro" id="IPR003860">
    <property type="entry name" value="Hemagglutn-estrase_hemagglutn"/>
</dbReference>
<dbReference type="InterPro" id="IPR001364">
    <property type="entry name" value="Hemagglutn_influenz_A/B"/>
</dbReference>
<dbReference type="InterPro" id="IPR014831">
    <property type="entry name" value="Hemagglutn_stalk_influenz-C"/>
</dbReference>
<dbReference type="Pfam" id="PF03996">
    <property type="entry name" value="Hema_esterase"/>
    <property type="match status" value="1"/>
</dbReference>
<dbReference type="Pfam" id="PF02710">
    <property type="entry name" value="Hema_HEFG"/>
    <property type="match status" value="1"/>
</dbReference>
<dbReference type="Pfam" id="PF08720">
    <property type="entry name" value="Hema_stalk"/>
    <property type="match status" value="1"/>
</dbReference>
<dbReference type="SUPFAM" id="SSF58064">
    <property type="entry name" value="Influenza hemagglutinin (stalk)"/>
    <property type="match status" value="1"/>
</dbReference>
<dbReference type="SUPFAM" id="SSF52266">
    <property type="entry name" value="SGNH hydrolase"/>
    <property type="match status" value="1"/>
</dbReference>
<dbReference type="SUPFAM" id="SSF49818">
    <property type="entry name" value="Viral protein domain"/>
    <property type="match status" value="1"/>
</dbReference>
<proteinExistence type="inferred from homology"/>